<proteinExistence type="inferred from homology"/>
<sequence>MSMADQLQIPADIKPRDGRFGCGPSKVRPEQLQALSTTAAPLFGTSHRQAPVKNLVGRLRSGLAELFSLPDGYQVILGNGGATAFWDAAAFGLIDKRSLHLSYGEFSSKFAAAVAKNPFVGDPVVIKSDAGSAPEPQSDPSVDLIAWAHNETSTGVAVPVRRPVDSGDALVAIDATSGAGGLPVDIGETDAYYFSPQKNFAGDGGLWLALMSPAALARVESIAASGRWVPDFLSLPIAVENSLKDQTYNTPAIGTLALMAEQVDWMLGNGGLDWAVKRTADSAGRLYSWAEERDYTTPFVADPKLRSQVVGTIDFVDDVDAAAVAKILRANGVVDTEPYRKLGRNQLRVGMFPAVDPDDVSALTQCVDWVVERL</sequence>
<reference key="1">
    <citation type="journal article" date="2005" name="Proc. Natl. Acad. Sci. U.S.A.">
        <title>The complete genome sequence of Mycobacterium avium subspecies paratuberculosis.</title>
        <authorList>
            <person name="Li L."/>
            <person name="Bannantine J.P."/>
            <person name="Zhang Q."/>
            <person name="Amonsin A."/>
            <person name="May B.J."/>
            <person name="Alt D."/>
            <person name="Banerji N."/>
            <person name="Kanjilal S."/>
            <person name="Kapur V."/>
        </authorList>
    </citation>
    <scope>NUCLEOTIDE SEQUENCE [LARGE SCALE GENOMIC DNA]</scope>
    <source>
        <strain>ATCC BAA-968 / K-10</strain>
    </source>
</reference>
<accession>Q742L2</accession>
<feature type="chain" id="PRO_0000293585" description="Putative phosphoserine aminotransferase">
    <location>
        <begin position="1"/>
        <end position="374"/>
    </location>
</feature>
<feature type="binding site" evidence="1">
    <location>
        <position position="48"/>
    </location>
    <ligand>
        <name>L-glutamate</name>
        <dbReference type="ChEBI" id="CHEBI:29985"/>
    </ligand>
</feature>
<feature type="binding site" evidence="1">
    <location>
        <begin position="82"/>
        <end position="83"/>
    </location>
    <ligand>
        <name>pyridoxal 5'-phosphate</name>
        <dbReference type="ChEBI" id="CHEBI:597326"/>
    </ligand>
</feature>
<feature type="binding site" evidence="1">
    <location>
        <position position="106"/>
    </location>
    <ligand>
        <name>pyridoxal 5'-phosphate</name>
        <dbReference type="ChEBI" id="CHEBI:597326"/>
    </ligand>
</feature>
<feature type="binding site" evidence="1">
    <location>
        <position position="152"/>
    </location>
    <ligand>
        <name>pyridoxal 5'-phosphate</name>
        <dbReference type="ChEBI" id="CHEBI:597326"/>
    </ligand>
</feature>
<feature type="binding site" evidence="1">
    <location>
        <position position="174"/>
    </location>
    <ligand>
        <name>pyridoxal 5'-phosphate</name>
        <dbReference type="ChEBI" id="CHEBI:597326"/>
    </ligand>
</feature>
<feature type="binding site" evidence="1">
    <location>
        <position position="197"/>
    </location>
    <ligand>
        <name>pyridoxal 5'-phosphate</name>
        <dbReference type="ChEBI" id="CHEBI:597326"/>
    </ligand>
</feature>
<feature type="binding site" evidence="1">
    <location>
        <begin position="249"/>
        <end position="250"/>
    </location>
    <ligand>
        <name>pyridoxal 5'-phosphate</name>
        <dbReference type="ChEBI" id="CHEBI:597326"/>
    </ligand>
</feature>
<feature type="modified residue" description="N6-(pyridoxal phosphate)lysine" evidence="1">
    <location>
        <position position="198"/>
    </location>
</feature>
<name>SERC_MYCPA</name>
<keyword id="KW-0028">Amino-acid biosynthesis</keyword>
<keyword id="KW-0032">Aminotransferase</keyword>
<keyword id="KW-0963">Cytoplasm</keyword>
<keyword id="KW-0663">Pyridoxal phosphate</keyword>
<keyword id="KW-0664">Pyridoxine biosynthesis</keyword>
<keyword id="KW-1185">Reference proteome</keyword>
<keyword id="KW-0718">Serine biosynthesis</keyword>
<keyword id="KW-0808">Transferase</keyword>
<gene>
    <name evidence="1" type="primary">serC</name>
    <name type="ordered locus">MAP_0823c</name>
</gene>
<organism>
    <name type="scientific">Mycolicibacterium paratuberculosis (strain ATCC BAA-968 / K-10)</name>
    <name type="common">Mycobacterium paratuberculosis</name>
    <dbReference type="NCBI Taxonomy" id="262316"/>
    <lineage>
        <taxon>Bacteria</taxon>
        <taxon>Bacillati</taxon>
        <taxon>Actinomycetota</taxon>
        <taxon>Actinomycetes</taxon>
        <taxon>Mycobacteriales</taxon>
        <taxon>Mycobacteriaceae</taxon>
        <taxon>Mycobacterium</taxon>
        <taxon>Mycobacterium avium complex (MAC)</taxon>
    </lineage>
</organism>
<protein>
    <recommendedName>
        <fullName>Putative phosphoserine aminotransferase</fullName>
        <ecNumber evidence="1">2.6.1.52</ecNumber>
    </recommendedName>
    <alternativeName>
        <fullName evidence="1">Phosphohydroxythreonine aminotransferase</fullName>
        <shortName evidence="1">PSAT</shortName>
    </alternativeName>
</protein>
<dbReference type="EC" id="2.6.1.52" evidence="1"/>
<dbReference type="EMBL" id="AE016958">
    <property type="protein sequence ID" value="AAS03140.1"/>
    <property type="molecule type" value="Genomic_DNA"/>
</dbReference>
<dbReference type="RefSeq" id="WP_003872901.1">
    <property type="nucleotide sequence ID" value="NZ_CP106873.1"/>
</dbReference>
<dbReference type="SMR" id="Q742L2"/>
<dbReference type="STRING" id="262316.MAP_0823c"/>
<dbReference type="KEGG" id="mpa:MAP_0823c"/>
<dbReference type="eggNOG" id="COG1932">
    <property type="taxonomic scope" value="Bacteria"/>
</dbReference>
<dbReference type="HOGENOM" id="CLU_061974_0_0_11"/>
<dbReference type="UniPathway" id="UPA00135">
    <property type="reaction ID" value="UER00197"/>
</dbReference>
<dbReference type="UniPathway" id="UPA00244">
    <property type="reaction ID" value="UER00311"/>
</dbReference>
<dbReference type="Proteomes" id="UP000000580">
    <property type="component" value="Chromosome"/>
</dbReference>
<dbReference type="GO" id="GO:0005737">
    <property type="term" value="C:cytoplasm"/>
    <property type="evidence" value="ECO:0007669"/>
    <property type="project" value="UniProtKB-SubCell"/>
</dbReference>
<dbReference type="GO" id="GO:0008453">
    <property type="term" value="F:alanine-glyoxylate transaminase activity"/>
    <property type="evidence" value="ECO:0007669"/>
    <property type="project" value="TreeGrafter"/>
</dbReference>
<dbReference type="GO" id="GO:0004760">
    <property type="term" value="F:L-serine-pyruvate transaminase activity"/>
    <property type="evidence" value="ECO:0007669"/>
    <property type="project" value="TreeGrafter"/>
</dbReference>
<dbReference type="GO" id="GO:0004648">
    <property type="term" value="F:O-phospho-L-serine:2-oxoglutarate aminotransferase activity"/>
    <property type="evidence" value="ECO:0007669"/>
    <property type="project" value="UniProtKB-UniRule"/>
</dbReference>
<dbReference type="GO" id="GO:0030170">
    <property type="term" value="F:pyridoxal phosphate binding"/>
    <property type="evidence" value="ECO:0007669"/>
    <property type="project" value="UniProtKB-UniRule"/>
</dbReference>
<dbReference type="GO" id="GO:0019265">
    <property type="term" value="P:glycine biosynthetic process, by transamination of glyoxylate"/>
    <property type="evidence" value="ECO:0007669"/>
    <property type="project" value="TreeGrafter"/>
</dbReference>
<dbReference type="GO" id="GO:0006564">
    <property type="term" value="P:L-serine biosynthetic process"/>
    <property type="evidence" value="ECO:0007669"/>
    <property type="project" value="UniProtKB-UniRule"/>
</dbReference>
<dbReference type="GO" id="GO:0008615">
    <property type="term" value="P:pyridoxine biosynthetic process"/>
    <property type="evidence" value="ECO:0007669"/>
    <property type="project" value="UniProtKB-UniRule"/>
</dbReference>
<dbReference type="Gene3D" id="3.90.1150.10">
    <property type="entry name" value="Aspartate Aminotransferase, domain 1"/>
    <property type="match status" value="1"/>
</dbReference>
<dbReference type="Gene3D" id="3.40.640.10">
    <property type="entry name" value="Type I PLP-dependent aspartate aminotransferase-like (Major domain)"/>
    <property type="match status" value="1"/>
</dbReference>
<dbReference type="HAMAP" id="MF_00160">
    <property type="entry name" value="SerC_aminotrans_5"/>
    <property type="match status" value="1"/>
</dbReference>
<dbReference type="InterPro" id="IPR000192">
    <property type="entry name" value="Aminotrans_V_dom"/>
</dbReference>
<dbReference type="InterPro" id="IPR022278">
    <property type="entry name" value="Pser_aminoTfrase"/>
</dbReference>
<dbReference type="InterPro" id="IPR006272">
    <property type="entry name" value="Pser_aminoTfrase_mycobac"/>
</dbReference>
<dbReference type="InterPro" id="IPR015424">
    <property type="entry name" value="PyrdxlP-dep_Trfase"/>
</dbReference>
<dbReference type="InterPro" id="IPR015421">
    <property type="entry name" value="PyrdxlP-dep_Trfase_major"/>
</dbReference>
<dbReference type="InterPro" id="IPR015422">
    <property type="entry name" value="PyrdxlP-dep_Trfase_small"/>
</dbReference>
<dbReference type="NCBIfam" id="TIGR01366">
    <property type="entry name" value="serC_3"/>
    <property type="match status" value="1"/>
</dbReference>
<dbReference type="PANTHER" id="PTHR21152:SF40">
    <property type="entry name" value="ALANINE--GLYOXYLATE AMINOTRANSFERASE"/>
    <property type="match status" value="1"/>
</dbReference>
<dbReference type="PANTHER" id="PTHR21152">
    <property type="entry name" value="AMINOTRANSFERASE CLASS V"/>
    <property type="match status" value="1"/>
</dbReference>
<dbReference type="Pfam" id="PF00266">
    <property type="entry name" value="Aminotran_5"/>
    <property type="match status" value="1"/>
</dbReference>
<dbReference type="PIRSF" id="PIRSF000525">
    <property type="entry name" value="SerC"/>
    <property type="match status" value="1"/>
</dbReference>
<dbReference type="SUPFAM" id="SSF53383">
    <property type="entry name" value="PLP-dependent transferases"/>
    <property type="match status" value="1"/>
</dbReference>
<evidence type="ECO:0000255" key="1">
    <source>
        <dbReference type="HAMAP-Rule" id="MF_00160"/>
    </source>
</evidence>
<comment type="function">
    <text evidence="1">Catalyzes the reversible conversion of 3-phosphohydroxypyruvate to phosphoserine and of 3-hydroxy-2-oxo-4-phosphonooxybutanoate to phosphohydroxythreonine.</text>
</comment>
<comment type="catalytic activity">
    <reaction evidence="1">
        <text>O-phospho-L-serine + 2-oxoglutarate = 3-phosphooxypyruvate + L-glutamate</text>
        <dbReference type="Rhea" id="RHEA:14329"/>
        <dbReference type="ChEBI" id="CHEBI:16810"/>
        <dbReference type="ChEBI" id="CHEBI:18110"/>
        <dbReference type="ChEBI" id="CHEBI:29985"/>
        <dbReference type="ChEBI" id="CHEBI:57524"/>
        <dbReference type="EC" id="2.6.1.52"/>
    </reaction>
</comment>
<comment type="catalytic activity">
    <reaction evidence="1">
        <text>4-(phosphooxy)-L-threonine + 2-oxoglutarate = (R)-3-hydroxy-2-oxo-4-phosphooxybutanoate + L-glutamate</text>
        <dbReference type="Rhea" id="RHEA:16573"/>
        <dbReference type="ChEBI" id="CHEBI:16810"/>
        <dbReference type="ChEBI" id="CHEBI:29985"/>
        <dbReference type="ChEBI" id="CHEBI:58452"/>
        <dbReference type="ChEBI" id="CHEBI:58538"/>
        <dbReference type="EC" id="2.6.1.52"/>
    </reaction>
</comment>
<comment type="cofactor">
    <cofactor evidence="1">
        <name>pyridoxal 5'-phosphate</name>
        <dbReference type="ChEBI" id="CHEBI:597326"/>
    </cofactor>
    <text evidence="1">Binds 1 pyridoxal phosphate per subunit.</text>
</comment>
<comment type="pathway">
    <text evidence="1">Amino-acid biosynthesis; L-serine biosynthesis; L-serine from 3-phospho-D-glycerate: step 2/3.</text>
</comment>
<comment type="pathway">
    <text evidence="1">Cofactor biosynthesis; pyridoxine 5'-phosphate biosynthesis; pyridoxine 5'-phosphate from D-erythrose 4-phosphate: step 3/5.</text>
</comment>
<comment type="subunit">
    <text evidence="1">Homodimer.</text>
</comment>
<comment type="subcellular location">
    <subcellularLocation>
        <location evidence="1">Cytoplasm</location>
    </subcellularLocation>
</comment>
<comment type="similarity">
    <text evidence="1">Belongs to the class-V pyridoxal-phosphate-dependent aminotransferase family. SerC subfamily.</text>
</comment>